<sequence length="541" mass="61249">MKSYTPYFMLLWSAVGIARAAKIIIVPPIMFESHLYIFKTLASALHERGHHTVLLLSEGRDIAPSNHYSLQRYPGIFNSTTSDAFLQSKMRNIFSGRLTAVELVDILDHYTKNCDMMVGNQALIQGLKKEKFDLLLVDPNDMCGFVIAHLLGVKYAVFSTGLWYPAEVGAPAPLAYVPEFNSLLTDRMNFLERMKNTGVYLISRIGVSFLVLPKYERIMQKYNLLPAKSMYDLVHGSSLWMLCTDVALEFPRPTLPNVVYVGGILTKPASPLPEDLQRWVSGAQEHGFVLVSFGAGVKYLSEDIANKLAGALGRLPQKVIWRFSGTKPKNLGNNTKLIEWLPQNDLLGHSNIRAFLSHGGLNSIFETMYHGVPVVGIPLFGDHYDTMTRVQAKGMGILLEWNTVTEGELYDALVKVINNPSYRQRAQKLSEIHKDQPGHPVNRTTYWIDYILRHDGARHLRSAVHQISFCQYFLLDIAFVLLLGAVLLYFILSYVTKFIYRKIKSLWSKNEHSTVNGHYQNGIRNGKYKGNGRVKHEKKVR</sequence>
<reference key="1">
    <citation type="journal article" date="1996" name="Genomics">
        <title>Molecular cloning, chromosomal mapping, and characterization of the mouse UDP-galactose:ceramide galactosyltransferase gene.</title>
        <authorList>
            <person name="Coetzee T."/>
            <person name="Li X."/>
            <person name="Fujita N."/>
            <person name="Marcus J."/>
            <person name="Suzuki K."/>
            <person name="Francke U."/>
            <person name="Popko B."/>
        </authorList>
    </citation>
    <scope>NUCLEOTIDE SEQUENCE [GENOMIC DNA]</scope>
</reference>
<reference key="2">
    <citation type="journal article" date="1996" name="Genomics">
        <title>Molecular cloning and characterization of the mouse CGT gene encoding UDP-galactose ceramide-galactosyltransferase (cerebroside synthetase).</title>
        <authorList>
            <person name="Bosio A."/>
            <person name="Binczek E."/>
            <person name="Stoffel W."/>
        </authorList>
    </citation>
    <scope>NUCLEOTIDE SEQUENCE [GENOMIC DNA / MRNA]</scope>
    <source>
        <strain>BALB/cJ</strain>
        <tissue>Leukocyte</tissue>
    </source>
</reference>
<reference key="3">
    <citation type="journal article" date="2005" name="Science">
        <title>The transcriptional landscape of the mammalian genome.</title>
        <authorList>
            <person name="Carninci P."/>
            <person name="Kasukawa T."/>
            <person name="Katayama S."/>
            <person name="Gough J."/>
            <person name="Frith M.C."/>
            <person name="Maeda N."/>
            <person name="Oyama R."/>
            <person name="Ravasi T."/>
            <person name="Lenhard B."/>
            <person name="Wells C."/>
            <person name="Kodzius R."/>
            <person name="Shimokawa K."/>
            <person name="Bajic V.B."/>
            <person name="Brenner S.E."/>
            <person name="Batalov S."/>
            <person name="Forrest A.R."/>
            <person name="Zavolan M."/>
            <person name="Davis M.J."/>
            <person name="Wilming L.G."/>
            <person name="Aidinis V."/>
            <person name="Allen J.E."/>
            <person name="Ambesi-Impiombato A."/>
            <person name="Apweiler R."/>
            <person name="Aturaliya R.N."/>
            <person name="Bailey T.L."/>
            <person name="Bansal M."/>
            <person name="Baxter L."/>
            <person name="Beisel K.W."/>
            <person name="Bersano T."/>
            <person name="Bono H."/>
            <person name="Chalk A.M."/>
            <person name="Chiu K.P."/>
            <person name="Choudhary V."/>
            <person name="Christoffels A."/>
            <person name="Clutterbuck D.R."/>
            <person name="Crowe M.L."/>
            <person name="Dalla E."/>
            <person name="Dalrymple B.P."/>
            <person name="de Bono B."/>
            <person name="Della Gatta G."/>
            <person name="di Bernardo D."/>
            <person name="Down T."/>
            <person name="Engstrom P."/>
            <person name="Fagiolini M."/>
            <person name="Faulkner G."/>
            <person name="Fletcher C.F."/>
            <person name="Fukushima T."/>
            <person name="Furuno M."/>
            <person name="Futaki S."/>
            <person name="Gariboldi M."/>
            <person name="Georgii-Hemming P."/>
            <person name="Gingeras T.R."/>
            <person name="Gojobori T."/>
            <person name="Green R.E."/>
            <person name="Gustincich S."/>
            <person name="Harbers M."/>
            <person name="Hayashi Y."/>
            <person name="Hensch T.K."/>
            <person name="Hirokawa N."/>
            <person name="Hill D."/>
            <person name="Huminiecki L."/>
            <person name="Iacono M."/>
            <person name="Ikeo K."/>
            <person name="Iwama A."/>
            <person name="Ishikawa T."/>
            <person name="Jakt M."/>
            <person name="Kanapin A."/>
            <person name="Katoh M."/>
            <person name="Kawasawa Y."/>
            <person name="Kelso J."/>
            <person name="Kitamura H."/>
            <person name="Kitano H."/>
            <person name="Kollias G."/>
            <person name="Krishnan S.P."/>
            <person name="Kruger A."/>
            <person name="Kummerfeld S.K."/>
            <person name="Kurochkin I.V."/>
            <person name="Lareau L.F."/>
            <person name="Lazarevic D."/>
            <person name="Lipovich L."/>
            <person name="Liu J."/>
            <person name="Liuni S."/>
            <person name="McWilliam S."/>
            <person name="Madan Babu M."/>
            <person name="Madera M."/>
            <person name="Marchionni L."/>
            <person name="Matsuda H."/>
            <person name="Matsuzawa S."/>
            <person name="Miki H."/>
            <person name="Mignone F."/>
            <person name="Miyake S."/>
            <person name="Morris K."/>
            <person name="Mottagui-Tabar S."/>
            <person name="Mulder N."/>
            <person name="Nakano N."/>
            <person name="Nakauchi H."/>
            <person name="Ng P."/>
            <person name="Nilsson R."/>
            <person name="Nishiguchi S."/>
            <person name="Nishikawa S."/>
            <person name="Nori F."/>
            <person name="Ohara O."/>
            <person name="Okazaki Y."/>
            <person name="Orlando V."/>
            <person name="Pang K.C."/>
            <person name="Pavan W.J."/>
            <person name="Pavesi G."/>
            <person name="Pesole G."/>
            <person name="Petrovsky N."/>
            <person name="Piazza S."/>
            <person name="Reed J."/>
            <person name="Reid J.F."/>
            <person name="Ring B.Z."/>
            <person name="Ringwald M."/>
            <person name="Rost B."/>
            <person name="Ruan Y."/>
            <person name="Salzberg S.L."/>
            <person name="Sandelin A."/>
            <person name="Schneider C."/>
            <person name="Schoenbach C."/>
            <person name="Sekiguchi K."/>
            <person name="Semple C.A."/>
            <person name="Seno S."/>
            <person name="Sessa L."/>
            <person name="Sheng Y."/>
            <person name="Shibata Y."/>
            <person name="Shimada H."/>
            <person name="Shimada K."/>
            <person name="Silva D."/>
            <person name="Sinclair B."/>
            <person name="Sperling S."/>
            <person name="Stupka E."/>
            <person name="Sugiura K."/>
            <person name="Sultana R."/>
            <person name="Takenaka Y."/>
            <person name="Taki K."/>
            <person name="Tammoja K."/>
            <person name="Tan S.L."/>
            <person name="Tang S."/>
            <person name="Taylor M.S."/>
            <person name="Tegner J."/>
            <person name="Teichmann S.A."/>
            <person name="Ueda H.R."/>
            <person name="van Nimwegen E."/>
            <person name="Verardo R."/>
            <person name="Wei C.L."/>
            <person name="Yagi K."/>
            <person name="Yamanishi H."/>
            <person name="Zabarovsky E."/>
            <person name="Zhu S."/>
            <person name="Zimmer A."/>
            <person name="Hide W."/>
            <person name="Bult C."/>
            <person name="Grimmond S.M."/>
            <person name="Teasdale R.D."/>
            <person name="Liu E.T."/>
            <person name="Brusic V."/>
            <person name="Quackenbush J."/>
            <person name="Wahlestedt C."/>
            <person name="Mattick J.S."/>
            <person name="Hume D.A."/>
            <person name="Kai C."/>
            <person name="Sasaki D."/>
            <person name="Tomaru Y."/>
            <person name="Fukuda S."/>
            <person name="Kanamori-Katayama M."/>
            <person name="Suzuki M."/>
            <person name="Aoki J."/>
            <person name="Arakawa T."/>
            <person name="Iida J."/>
            <person name="Imamura K."/>
            <person name="Itoh M."/>
            <person name="Kato T."/>
            <person name="Kawaji H."/>
            <person name="Kawagashira N."/>
            <person name="Kawashima T."/>
            <person name="Kojima M."/>
            <person name="Kondo S."/>
            <person name="Konno H."/>
            <person name="Nakano K."/>
            <person name="Ninomiya N."/>
            <person name="Nishio T."/>
            <person name="Okada M."/>
            <person name="Plessy C."/>
            <person name="Shibata K."/>
            <person name="Shiraki T."/>
            <person name="Suzuki S."/>
            <person name="Tagami M."/>
            <person name="Waki K."/>
            <person name="Watahiki A."/>
            <person name="Okamura-Oho Y."/>
            <person name="Suzuki H."/>
            <person name="Kawai J."/>
            <person name="Hayashizaki Y."/>
        </authorList>
    </citation>
    <scope>NUCLEOTIDE SEQUENCE [LARGE SCALE MRNA]</scope>
    <source>
        <strain>C57BL/6J</strain>
        <tissue>Cerebellum</tissue>
    </source>
</reference>
<reference key="4">
    <citation type="journal article" date="2004" name="Genome Res.">
        <title>The status, quality, and expansion of the NIH full-length cDNA project: the Mammalian Gene Collection (MGC).</title>
        <authorList>
            <consortium name="The MGC Project Team"/>
        </authorList>
    </citation>
    <scope>NUCLEOTIDE SEQUENCE [LARGE SCALE MRNA]</scope>
    <source>
        <strain>FVB/N</strain>
        <tissue>Kidney</tissue>
    </source>
</reference>
<reference key="5">
    <citation type="journal article" date="2010" name="Cell">
        <title>A tissue-specific atlas of mouse protein phosphorylation and expression.</title>
        <authorList>
            <person name="Huttlin E.L."/>
            <person name="Jedrychowski M.P."/>
            <person name="Elias J.E."/>
            <person name="Goswami T."/>
            <person name="Rad R."/>
            <person name="Beausoleil S.A."/>
            <person name="Villen J."/>
            <person name="Haas W."/>
            <person name="Sowa M.E."/>
            <person name="Gygi S.P."/>
        </authorList>
    </citation>
    <scope>IDENTIFICATION BY MASS SPECTROMETRY [LARGE SCALE ANALYSIS]</scope>
    <source>
        <tissue>Brain</tissue>
    </source>
</reference>
<comment type="function">
    <text evidence="1">Catalyzes the transfer of galactose to ceramide, a key enzymatic step in the biosynthesis of galactocerebrosides, which are abundant sphingolipids of the myelin membrane of the central nervous system and peripheral nervous system. Galactosylates both hydroxy- and non-hydroxy fatty acid-containing ceramides and diglycerides.</text>
</comment>
<comment type="catalytic activity">
    <reaction evidence="1">
        <text>an N-acylsphing-4-enine + UDP-alpha-D-galactose = a beta-D-galactosyl-(1&lt;-&gt;1')-N-acylsphing-4-enine + UDP + H(+)</text>
        <dbReference type="Rhea" id="RHEA:13093"/>
        <dbReference type="ChEBI" id="CHEBI:15378"/>
        <dbReference type="ChEBI" id="CHEBI:18390"/>
        <dbReference type="ChEBI" id="CHEBI:52639"/>
        <dbReference type="ChEBI" id="CHEBI:58223"/>
        <dbReference type="ChEBI" id="CHEBI:66914"/>
        <dbReference type="EC" id="2.4.1.47"/>
    </reaction>
    <physiologicalReaction direction="left-to-right" evidence="1">
        <dbReference type="Rhea" id="RHEA:13094"/>
    </physiologicalReaction>
</comment>
<comment type="catalytic activity">
    <reaction evidence="1">
        <text>N-(2-hydroxy-hexanoyl)-sphing-4-enine + UDP-alpha-D-galactose = N-(2-hydroxy-hexanoyl)-beta-D-galactosyl-sphing-4-enine + UDP + H(+)</text>
        <dbReference type="Rhea" id="RHEA:43400"/>
        <dbReference type="ChEBI" id="CHEBI:15378"/>
        <dbReference type="ChEBI" id="CHEBI:58223"/>
        <dbReference type="ChEBI" id="CHEBI:66914"/>
        <dbReference type="ChEBI" id="CHEBI:83244"/>
        <dbReference type="ChEBI" id="CHEBI:83246"/>
    </reaction>
    <physiologicalReaction direction="left-to-right" evidence="1">
        <dbReference type="Rhea" id="RHEA:43401"/>
    </physiologicalReaction>
</comment>
<comment type="catalytic activity">
    <reaction evidence="1">
        <text>N-(2-hydroxy-hexanoyl)-sphinganine + UDP-alpha-D-galactose = N-(2-hydroxyhexanoyl)-beta-D-galactosylsphinganine + UDP + H(+)</text>
        <dbReference type="Rhea" id="RHEA:43404"/>
        <dbReference type="ChEBI" id="CHEBI:15378"/>
        <dbReference type="ChEBI" id="CHEBI:58223"/>
        <dbReference type="ChEBI" id="CHEBI:66914"/>
        <dbReference type="ChEBI" id="CHEBI:83248"/>
        <dbReference type="ChEBI" id="CHEBI:83257"/>
    </reaction>
    <physiologicalReaction direction="left-to-right" evidence="1">
        <dbReference type="Rhea" id="RHEA:43405"/>
    </physiologicalReaction>
</comment>
<comment type="catalytic activity">
    <reaction evidence="2">
        <text>an N-acyl-sphingoid base + UDP-alpha-D-galactose = a D-galactosylceramide + UDP + H(+)</text>
        <dbReference type="Rhea" id="RHEA:48344"/>
        <dbReference type="ChEBI" id="CHEBI:15378"/>
        <dbReference type="ChEBI" id="CHEBI:36498"/>
        <dbReference type="ChEBI" id="CHEBI:58223"/>
        <dbReference type="ChEBI" id="CHEBI:66914"/>
        <dbReference type="ChEBI" id="CHEBI:83273"/>
    </reaction>
</comment>
<comment type="pathway">
    <text evidence="1">Sphingolipid metabolism; galactosylceramide biosynthesis.</text>
</comment>
<comment type="subcellular location">
    <subcellularLocation>
        <location evidence="1">Membrane</location>
        <topology evidence="1">Single-pass membrane protein</topology>
    </subcellularLocation>
    <subcellularLocation>
        <location evidence="1">Endoplasmic reticulum</location>
    </subcellularLocation>
</comment>
<comment type="similarity">
    <text evidence="5">Belongs to the UDP-glycosyltransferase family.</text>
</comment>
<protein>
    <recommendedName>
        <fullName evidence="5">2-hydroxyacylsphingosine 1-beta-galactosyltransferase</fullName>
        <ecNumber evidence="1">2.4.1.47</ecNumber>
    </recommendedName>
    <alternativeName>
        <fullName>Ceramide UDP-galactosyltransferase</fullName>
    </alternativeName>
    <alternativeName>
        <fullName>Cerebroside synthase</fullName>
    </alternativeName>
    <alternativeName>
        <fullName>UDP-galactose-ceramide galactosyltransferase</fullName>
    </alternativeName>
</protein>
<accession>Q64676</accession>
<accession>Q61634</accession>
<accession>Q91W57</accession>
<feature type="signal peptide" evidence="3">
    <location>
        <begin position="1"/>
        <end position="20"/>
    </location>
</feature>
<feature type="chain" id="PRO_0000036065" description="2-hydroxyacylsphingosine 1-beta-galactosyltransferase">
    <location>
        <begin position="21"/>
        <end position="541"/>
    </location>
</feature>
<feature type="transmembrane region" description="Helical" evidence="3">
    <location>
        <begin position="472"/>
        <end position="492"/>
    </location>
</feature>
<feature type="region of interest" description="Disordered" evidence="4">
    <location>
        <begin position="518"/>
        <end position="541"/>
    </location>
</feature>
<feature type="compositionally biased region" description="Basic residues" evidence="4">
    <location>
        <begin position="526"/>
        <end position="541"/>
    </location>
</feature>
<feature type="glycosylation site" description="N-linked (GlcNAc...) asparagine" evidence="3">
    <location>
        <position position="78"/>
    </location>
</feature>
<feature type="glycosylation site" description="N-linked (GlcNAc...) asparagine" evidence="3">
    <location>
        <position position="333"/>
    </location>
</feature>
<feature type="glycosylation site" description="N-linked (GlcNAc...) asparagine" evidence="3">
    <location>
        <position position="442"/>
    </location>
</feature>
<feature type="sequence conflict" description="In Ref. 1; AAC53576." evidence="5" ref="1">
    <original>T</original>
    <variation>S</variation>
    <location>
        <position position="335"/>
    </location>
</feature>
<feature type="sequence conflict" description="In Ref. 2; CAA63090/CAA63091." evidence="5" ref="2">
    <original>R</original>
    <variation>H</variation>
    <location>
        <position position="458"/>
    </location>
</feature>
<feature type="sequence conflict" description="In Ref. 2; CAA63090/CAA63091." evidence="5" ref="2">
    <original>E</original>
    <variation>K</variation>
    <location>
        <position position="511"/>
    </location>
</feature>
<feature type="sequence conflict" description="In Ref. 2; CAA63090/CAA63091." evidence="5" ref="2">
    <original>R</original>
    <variation>P</variation>
    <location>
        <position position="524"/>
    </location>
</feature>
<feature type="sequence conflict" description="In Ref. 2; CAA63090/CAA63091." evidence="5" ref="2">
    <original>RV</original>
    <variation>HI</variation>
    <location>
        <begin position="533"/>
        <end position="534"/>
    </location>
</feature>
<feature type="sequence conflict" description="In Ref. 2; CAA63090/CAA63091." evidence="5" ref="2">
    <original>R</original>
    <variation>K</variation>
    <location>
        <position position="541"/>
    </location>
</feature>
<keyword id="KW-0256">Endoplasmic reticulum</keyword>
<keyword id="KW-0325">Glycoprotein</keyword>
<keyword id="KW-0328">Glycosyltransferase</keyword>
<keyword id="KW-0443">Lipid metabolism</keyword>
<keyword id="KW-0472">Membrane</keyword>
<keyword id="KW-1185">Reference proteome</keyword>
<keyword id="KW-0732">Signal</keyword>
<keyword id="KW-0746">Sphingolipid metabolism</keyword>
<keyword id="KW-0808">Transferase</keyword>
<keyword id="KW-0812">Transmembrane</keyword>
<keyword id="KW-1133">Transmembrane helix</keyword>
<proteinExistence type="evidence at protein level"/>
<gene>
    <name evidence="6" type="primary">Ugt8</name>
    <name type="synonym">Cgt</name>
    <name type="synonym">Ugt4</name>
    <name type="synonym">Ugt8a</name>
</gene>
<evidence type="ECO:0000250" key="1">
    <source>
        <dbReference type="UniProtKB" id="Q09426"/>
    </source>
</evidence>
<evidence type="ECO:0000250" key="2">
    <source>
        <dbReference type="UniProtKB" id="Q16880"/>
    </source>
</evidence>
<evidence type="ECO:0000255" key="3"/>
<evidence type="ECO:0000256" key="4">
    <source>
        <dbReference type="SAM" id="MobiDB-lite"/>
    </source>
</evidence>
<evidence type="ECO:0000305" key="5"/>
<evidence type="ECO:0000312" key="6">
    <source>
        <dbReference type="EMBL" id="AAC53576.1"/>
    </source>
</evidence>
<dbReference type="EC" id="2.4.1.47" evidence="1"/>
<dbReference type="EMBL" id="U48896">
    <property type="protein sequence ID" value="AAC53576.1"/>
    <property type="molecule type" value="Genomic_DNA"/>
</dbReference>
<dbReference type="EMBL" id="U48892">
    <property type="protein sequence ID" value="AAC53576.1"/>
    <property type="status" value="JOINED"/>
    <property type="molecule type" value="Genomic_DNA"/>
</dbReference>
<dbReference type="EMBL" id="U48893">
    <property type="protein sequence ID" value="AAC53576.1"/>
    <property type="status" value="JOINED"/>
    <property type="molecule type" value="Genomic_DNA"/>
</dbReference>
<dbReference type="EMBL" id="U48894">
    <property type="protein sequence ID" value="AAC53576.1"/>
    <property type="status" value="JOINED"/>
    <property type="molecule type" value="Genomic_DNA"/>
</dbReference>
<dbReference type="EMBL" id="X92122">
    <property type="protein sequence ID" value="CAA63090.1"/>
    <property type="molecule type" value="mRNA"/>
</dbReference>
<dbReference type="EMBL" id="X92123">
    <property type="protein sequence ID" value="CAA63091.1"/>
    <property type="molecule type" value="Genomic_DNA"/>
</dbReference>
<dbReference type="EMBL" id="X92124">
    <property type="protein sequence ID" value="CAA63091.1"/>
    <property type="status" value="JOINED"/>
    <property type="molecule type" value="Genomic_DNA"/>
</dbReference>
<dbReference type="EMBL" id="X92125">
    <property type="protein sequence ID" value="CAA63091.1"/>
    <property type="status" value="JOINED"/>
    <property type="molecule type" value="Genomic_DNA"/>
</dbReference>
<dbReference type="EMBL" id="X92126">
    <property type="protein sequence ID" value="CAA63091.1"/>
    <property type="status" value="JOINED"/>
    <property type="molecule type" value="Genomic_DNA"/>
</dbReference>
<dbReference type="EMBL" id="X92177">
    <property type="protein sequence ID" value="CAA63091.1"/>
    <property type="status" value="JOINED"/>
    <property type="molecule type" value="Genomic_DNA"/>
</dbReference>
<dbReference type="EMBL" id="AK137364">
    <property type="protein sequence ID" value="BAE23325.1"/>
    <property type="molecule type" value="mRNA"/>
</dbReference>
<dbReference type="EMBL" id="BC016885">
    <property type="protein sequence ID" value="AAH16885.1"/>
    <property type="molecule type" value="mRNA"/>
</dbReference>
<dbReference type="CCDS" id="CCDS17821.1"/>
<dbReference type="RefSeq" id="NP_035804.2">
    <property type="nucleotide sequence ID" value="NM_011674.4"/>
</dbReference>
<dbReference type="RefSeq" id="XP_006501372.2">
    <property type="nucleotide sequence ID" value="XM_006501309.3"/>
</dbReference>
<dbReference type="RefSeq" id="XP_006501373.1">
    <property type="nucleotide sequence ID" value="XM_006501310.3"/>
</dbReference>
<dbReference type="SMR" id="Q64676"/>
<dbReference type="FunCoup" id="Q64676">
    <property type="interactions" value="884"/>
</dbReference>
<dbReference type="STRING" id="10090.ENSMUSP00000143605"/>
<dbReference type="BindingDB" id="Q64676"/>
<dbReference type="ChEMBL" id="CHEMBL4739858"/>
<dbReference type="CAZy" id="GT1">
    <property type="family name" value="Glycosyltransferase Family 1"/>
</dbReference>
<dbReference type="GlyConnect" id="2096">
    <property type="glycosylation" value="10 N-Linked glycans (1 site)"/>
</dbReference>
<dbReference type="GlyCosmos" id="Q64676">
    <property type="glycosylation" value="3 sites, 10 glycans"/>
</dbReference>
<dbReference type="GlyGen" id="Q64676">
    <property type="glycosylation" value="3 sites, 13 N-linked glycans (3 sites)"/>
</dbReference>
<dbReference type="iPTMnet" id="Q64676"/>
<dbReference type="PhosphoSitePlus" id="Q64676"/>
<dbReference type="SwissPalm" id="Q64676"/>
<dbReference type="jPOST" id="Q64676"/>
<dbReference type="PaxDb" id="10090-ENSMUSP00000050852"/>
<dbReference type="PeptideAtlas" id="Q64676"/>
<dbReference type="ProteomicsDB" id="283900"/>
<dbReference type="Antibodypedia" id="2809">
    <property type="antibodies" value="217 antibodies from 30 providers"/>
</dbReference>
<dbReference type="DNASU" id="22239"/>
<dbReference type="Ensembl" id="ENSMUST00000057944.12">
    <property type="protein sequence ID" value="ENSMUSP00000050852.8"/>
    <property type="gene ID" value="ENSMUSG00000032854.13"/>
</dbReference>
<dbReference type="Ensembl" id="ENSMUST00000198610.2">
    <property type="protein sequence ID" value="ENSMUSP00000143605.2"/>
    <property type="gene ID" value="ENSMUSG00000032854.13"/>
</dbReference>
<dbReference type="GeneID" id="22239"/>
<dbReference type="KEGG" id="mmu:22239"/>
<dbReference type="UCSC" id="uc008rfy.1">
    <property type="organism name" value="mouse"/>
</dbReference>
<dbReference type="AGR" id="MGI:109522"/>
<dbReference type="CTD" id="22239"/>
<dbReference type="MGI" id="MGI:109522">
    <property type="gene designation" value="Ugt8a"/>
</dbReference>
<dbReference type="VEuPathDB" id="HostDB:ENSMUSG00000032854"/>
<dbReference type="eggNOG" id="KOG1192">
    <property type="taxonomic scope" value="Eukaryota"/>
</dbReference>
<dbReference type="GeneTree" id="ENSGT00940000156545"/>
<dbReference type="HOGENOM" id="CLU_012949_3_1_1"/>
<dbReference type="InParanoid" id="Q64676"/>
<dbReference type="OMA" id="WKYEGSA"/>
<dbReference type="OrthoDB" id="5835829at2759"/>
<dbReference type="PhylomeDB" id="Q64676"/>
<dbReference type="TreeFam" id="TF315472"/>
<dbReference type="Reactome" id="R-MMU-9840309">
    <property type="pathway name" value="Glycosphingolipid biosynthesis"/>
</dbReference>
<dbReference type="UniPathway" id="UPA00787"/>
<dbReference type="BioGRID-ORCS" id="22239">
    <property type="hits" value="4 hits in 80 CRISPR screens"/>
</dbReference>
<dbReference type="ChiTaRS" id="Ugt8a">
    <property type="organism name" value="mouse"/>
</dbReference>
<dbReference type="PRO" id="PR:Q64676"/>
<dbReference type="Proteomes" id="UP000000589">
    <property type="component" value="Chromosome 3"/>
</dbReference>
<dbReference type="RNAct" id="Q64676">
    <property type="molecule type" value="protein"/>
</dbReference>
<dbReference type="Bgee" id="ENSMUSG00000032854">
    <property type="expression patterns" value="Expressed in cerebellar nuclear complex and 160 other cell types or tissues"/>
</dbReference>
<dbReference type="GO" id="GO:0005783">
    <property type="term" value="C:endoplasmic reticulum"/>
    <property type="evidence" value="ECO:0000250"/>
    <property type="project" value="UniProtKB"/>
</dbReference>
<dbReference type="GO" id="GO:0016020">
    <property type="term" value="C:membrane"/>
    <property type="evidence" value="ECO:0007669"/>
    <property type="project" value="UniProtKB-SubCell"/>
</dbReference>
<dbReference type="GO" id="GO:0008120">
    <property type="term" value="F:ceramide glucosyltransferase activity"/>
    <property type="evidence" value="ECO:0000304"/>
    <property type="project" value="MGI"/>
</dbReference>
<dbReference type="GO" id="GO:0003851">
    <property type="term" value="F:N-acylsphingosine galactosyltransferase activity"/>
    <property type="evidence" value="ECO:0000250"/>
    <property type="project" value="UniProtKB"/>
</dbReference>
<dbReference type="GO" id="GO:0008489">
    <property type="term" value="F:UDP-galactose:glucosylceramide beta-1,4-galactosyltransferase activity"/>
    <property type="evidence" value="ECO:0007669"/>
    <property type="project" value="Ensembl"/>
</dbReference>
<dbReference type="GO" id="GO:0007010">
    <property type="term" value="P:cytoskeleton organization"/>
    <property type="evidence" value="ECO:0000315"/>
    <property type="project" value="BHF-UCL"/>
</dbReference>
<dbReference type="GO" id="GO:0006682">
    <property type="term" value="P:galactosylceramide biosynthetic process"/>
    <property type="evidence" value="ECO:0000250"/>
    <property type="project" value="UniProtKB"/>
</dbReference>
<dbReference type="GO" id="GO:0009247">
    <property type="term" value="P:glycolipid biosynthetic process"/>
    <property type="evidence" value="ECO:0000304"/>
    <property type="project" value="MGI"/>
</dbReference>
<dbReference type="GO" id="GO:0042552">
    <property type="term" value="P:myelination"/>
    <property type="evidence" value="ECO:0000304"/>
    <property type="project" value="MGI"/>
</dbReference>
<dbReference type="GO" id="GO:0048812">
    <property type="term" value="P:neuron projection morphogenesis"/>
    <property type="evidence" value="ECO:0000315"/>
    <property type="project" value="BHF-UCL"/>
</dbReference>
<dbReference type="GO" id="GO:0030913">
    <property type="term" value="P:paranodal junction assembly"/>
    <property type="evidence" value="ECO:0000315"/>
    <property type="project" value="BHF-UCL"/>
</dbReference>
<dbReference type="GO" id="GO:0002175">
    <property type="term" value="P:protein localization to paranode region of axon"/>
    <property type="evidence" value="ECO:0000315"/>
    <property type="project" value="BHF-UCL"/>
</dbReference>
<dbReference type="GO" id="GO:0035902">
    <property type="term" value="P:response to immobilization stress"/>
    <property type="evidence" value="ECO:0007669"/>
    <property type="project" value="Ensembl"/>
</dbReference>
<dbReference type="CDD" id="cd03784">
    <property type="entry name" value="GT1_Gtf-like"/>
    <property type="match status" value="1"/>
</dbReference>
<dbReference type="FunFam" id="3.40.50.2000:FF:000033">
    <property type="entry name" value="2-hydroxyacylsphingosine 1-beta-galactosyltransferase"/>
    <property type="match status" value="1"/>
</dbReference>
<dbReference type="FunFam" id="3.40.50.2000:FF:000001">
    <property type="entry name" value="UDP-glucuronosyltransferase"/>
    <property type="match status" value="1"/>
</dbReference>
<dbReference type="Gene3D" id="3.40.50.2000">
    <property type="entry name" value="Glycogen Phosphorylase B"/>
    <property type="match status" value="2"/>
</dbReference>
<dbReference type="InterPro" id="IPR050271">
    <property type="entry name" value="UDP-glycosyltransferase"/>
</dbReference>
<dbReference type="InterPro" id="IPR002213">
    <property type="entry name" value="UDP_glucos_trans"/>
</dbReference>
<dbReference type="InterPro" id="IPR035595">
    <property type="entry name" value="UDP_glycos_trans_CS"/>
</dbReference>
<dbReference type="PANTHER" id="PTHR48043:SF54">
    <property type="entry name" value="2-HYDROXYACYLSPHINGOSINE 1-BETA-GALACTOSYLTRANSFERASE"/>
    <property type="match status" value="1"/>
</dbReference>
<dbReference type="PANTHER" id="PTHR48043">
    <property type="entry name" value="EG:EG0003.4 PROTEIN-RELATED"/>
    <property type="match status" value="1"/>
</dbReference>
<dbReference type="Pfam" id="PF00201">
    <property type="entry name" value="UDPGT"/>
    <property type="match status" value="1"/>
</dbReference>
<dbReference type="SUPFAM" id="SSF53756">
    <property type="entry name" value="UDP-Glycosyltransferase/glycogen phosphorylase"/>
    <property type="match status" value="1"/>
</dbReference>
<dbReference type="PROSITE" id="PS00375">
    <property type="entry name" value="UDPGT"/>
    <property type="match status" value="1"/>
</dbReference>
<organism>
    <name type="scientific">Mus musculus</name>
    <name type="common">Mouse</name>
    <dbReference type="NCBI Taxonomy" id="10090"/>
    <lineage>
        <taxon>Eukaryota</taxon>
        <taxon>Metazoa</taxon>
        <taxon>Chordata</taxon>
        <taxon>Craniata</taxon>
        <taxon>Vertebrata</taxon>
        <taxon>Euteleostomi</taxon>
        <taxon>Mammalia</taxon>
        <taxon>Eutheria</taxon>
        <taxon>Euarchontoglires</taxon>
        <taxon>Glires</taxon>
        <taxon>Rodentia</taxon>
        <taxon>Myomorpha</taxon>
        <taxon>Muroidea</taxon>
        <taxon>Muridae</taxon>
        <taxon>Murinae</taxon>
        <taxon>Mus</taxon>
        <taxon>Mus</taxon>
    </lineage>
</organism>
<name>CGT_MOUSE</name>